<reference key="1">
    <citation type="journal article" date="2009" name="PLoS Biol.">
        <title>Lineage-specific biology revealed by a finished genome assembly of the mouse.</title>
        <authorList>
            <person name="Church D.M."/>
            <person name="Goodstadt L."/>
            <person name="Hillier L.W."/>
            <person name="Zody M.C."/>
            <person name="Goldstein S."/>
            <person name="She X."/>
            <person name="Bult C.J."/>
            <person name="Agarwala R."/>
            <person name="Cherry J.L."/>
            <person name="DiCuccio M."/>
            <person name="Hlavina W."/>
            <person name="Kapustin Y."/>
            <person name="Meric P."/>
            <person name="Maglott D."/>
            <person name="Birtle Z."/>
            <person name="Marques A.C."/>
            <person name="Graves T."/>
            <person name="Zhou S."/>
            <person name="Teague B."/>
            <person name="Potamousis K."/>
            <person name="Churas C."/>
            <person name="Place M."/>
            <person name="Herschleb J."/>
            <person name="Runnheim R."/>
            <person name="Forrest D."/>
            <person name="Amos-Landgraf J."/>
            <person name="Schwartz D.C."/>
            <person name="Cheng Z."/>
            <person name="Lindblad-Toh K."/>
            <person name="Eichler E.E."/>
            <person name="Ponting C.P."/>
        </authorList>
    </citation>
    <scope>NUCLEOTIDE SEQUENCE [LARGE SCALE GENOMIC DNA]</scope>
    <source>
        <strain>C57BL/6J</strain>
    </source>
</reference>
<reference evidence="4" key="2">
    <citation type="journal article" date="2003" name="Mol. Biol. Evol.">
        <title>Adaptive diversification of bitter taste receptor genes in mammalian evolution.</title>
        <authorList>
            <person name="Shi P."/>
            <person name="Zhang J."/>
            <person name="Yang H."/>
            <person name="Zhang Y.-P."/>
        </authorList>
    </citation>
    <scope>IDENTIFICATION</scope>
</reference>
<protein>
    <recommendedName>
        <fullName>Taste receptor type 2 member 113</fullName>
        <shortName>T2R113</shortName>
        <shortName>mT2R58</shortName>
    </recommendedName>
</protein>
<evidence type="ECO:0000255" key="1"/>
<evidence type="ECO:0000303" key="2">
    <source>
    </source>
</evidence>
<evidence type="ECO:0000305" key="3"/>
<evidence type="ECO:0000312" key="4">
    <source>
        <dbReference type="EMBL" id="DAA01225.1"/>
    </source>
</evidence>
<evidence type="ECO:0000312" key="5">
    <source>
        <dbReference type="MGI" id="MGI:2681217"/>
    </source>
</evidence>
<gene>
    <name evidence="5" type="primary">Tas2r113</name>
    <name evidence="2" type="synonym">T2r58</name>
</gene>
<proteinExistence type="inferred from homology"/>
<comment type="function">
    <text evidence="3">Putative taste receptor which may play a role in the perception of bitterness.</text>
</comment>
<comment type="subcellular location">
    <subcellularLocation>
        <location evidence="3">Membrane</location>
        <topology evidence="3">Multi-pass membrane protein</topology>
    </subcellularLocation>
</comment>
<comment type="miscellaneous">
    <text evidence="3">Several bitter taste receptors are expressed in a single taste receptor cell.</text>
</comment>
<comment type="similarity">
    <text evidence="1">Belongs to the G-protein coupled receptor T2R family.</text>
</comment>
<keyword id="KW-0297">G-protein coupled receptor</keyword>
<keyword id="KW-0325">Glycoprotein</keyword>
<keyword id="KW-0472">Membrane</keyword>
<keyword id="KW-0675">Receptor</keyword>
<keyword id="KW-1185">Reference proteome</keyword>
<keyword id="KW-0716">Sensory transduction</keyword>
<keyword id="KW-0919">Taste</keyword>
<keyword id="KW-0807">Transducer</keyword>
<keyword id="KW-0812">Transmembrane</keyword>
<keyword id="KW-1133">Transmembrane helix</keyword>
<sequence>MVAVLQSTLPIIFSMEFIMGTLGNGFIFLIVCIDWVQRRKISLVDQIRTALAISRIALIWLIFLDWWVSVHYPALHETGKMLSTYLISWTVINHCNFWLTANLSILYFLKIANFSNIIFLYLKFRSKNVVLVTLLVSLFFLFLNTVIIKIFSDVCFDSVQRNVSQIFIMYNHEQICKFLSFTNPMFTFIPFVMSTVMFSLLIFSLWRHLKNMQHTAKGCRDISTTVHIRALQTIIVSVVLYTIFFLSFFVKVWSFVSPERYLIFLFVWALGNAVFSAHPFVMILVNRRLRLASLSLIFWLWYRFKNIEV</sequence>
<feature type="chain" id="PRO_0000248256" description="Taste receptor type 2 member 113">
    <location>
        <begin position="1"/>
        <end position="309"/>
    </location>
</feature>
<feature type="topological domain" description="Extracellular" evidence="1">
    <location>
        <begin position="1"/>
        <end position="10"/>
    </location>
</feature>
<feature type="transmembrane region" description="Helical; Name=1" evidence="1">
    <location>
        <begin position="11"/>
        <end position="31"/>
    </location>
</feature>
<feature type="topological domain" description="Cytoplasmic" evidence="1">
    <location>
        <begin position="32"/>
        <end position="55"/>
    </location>
</feature>
<feature type="transmembrane region" description="Helical; Name=2" evidence="1">
    <location>
        <begin position="56"/>
        <end position="76"/>
    </location>
</feature>
<feature type="topological domain" description="Extracellular" evidence="1">
    <location>
        <begin position="77"/>
        <end position="80"/>
    </location>
</feature>
<feature type="transmembrane region" description="Helical; Name=3" evidence="1">
    <location>
        <begin position="81"/>
        <end position="101"/>
    </location>
</feature>
<feature type="topological domain" description="Cytoplasmic" evidence="1">
    <location>
        <begin position="102"/>
        <end position="127"/>
    </location>
</feature>
<feature type="transmembrane region" description="Helical; Name=4" evidence="1">
    <location>
        <begin position="128"/>
        <end position="148"/>
    </location>
</feature>
<feature type="topological domain" description="Extracellular" evidence="1">
    <location>
        <begin position="149"/>
        <end position="185"/>
    </location>
</feature>
<feature type="transmembrane region" description="Helical; Name=5" evidence="1">
    <location>
        <begin position="186"/>
        <end position="206"/>
    </location>
</feature>
<feature type="topological domain" description="Cytoplasmic" evidence="1">
    <location>
        <begin position="207"/>
        <end position="229"/>
    </location>
</feature>
<feature type="transmembrane region" description="Helical; Name=6" evidence="1">
    <location>
        <begin position="230"/>
        <end position="250"/>
    </location>
</feature>
<feature type="topological domain" description="Extracellular" evidence="1">
    <location>
        <begin position="251"/>
        <end position="262"/>
    </location>
</feature>
<feature type="transmembrane region" description="Helical; Name=7" evidence="1">
    <location>
        <begin position="263"/>
        <end position="283"/>
    </location>
</feature>
<feature type="topological domain" description="Cytoplasmic" evidence="1">
    <location>
        <begin position="284"/>
        <end position="309"/>
    </location>
</feature>
<feature type="glycosylation site" description="N-linked (GlcNAc...) asparagine" evidence="1">
    <location>
        <position position="162"/>
    </location>
</feature>
<dbReference type="EMBL" id="AC129318">
    <property type="status" value="NOT_ANNOTATED_CDS"/>
    <property type="molecule type" value="Genomic_DNA"/>
</dbReference>
<dbReference type="EMBL" id="BK001086">
    <property type="protein sequence ID" value="DAA01225.1"/>
    <property type="molecule type" value="Genomic_DNA"/>
</dbReference>
<dbReference type="CCDS" id="CCDS20627.1"/>
<dbReference type="RefSeq" id="NP_996901.1">
    <property type="nucleotide sequence ID" value="NM_207018.1"/>
</dbReference>
<dbReference type="SMR" id="Q7M711"/>
<dbReference type="FunCoup" id="Q7M711">
    <property type="interactions" value="88"/>
</dbReference>
<dbReference type="STRING" id="10090.ENSMUSP00000078044"/>
<dbReference type="GlyCosmos" id="Q7M711">
    <property type="glycosylation" value="1 site, No reported glycans"/>
</dbReference>
<dbReference type="GlyGen" id="Q7M711">
    <property type="glycosylation" value="1 site"/>
</dbReference>
<dbReference type="PaxDb" id="10090-ENSMUSP00000078044"/>
<dbReference type="DNASU" id="387345"/>
<dbReference type="Ensembl" id="ENSMUST00000079035.3">
    <property type="protein sequence ID" value="ENSMUSP00000078044.3"/>
    <property type="gene ID" value="ENSMUSG00000056926.3"/>
</dbReference>
<dbReference type="GeneID" id="387345"/>
<dbReference type="KEGG" id="mmu:387345"/>
<dbReference type="UCSC" id="uc009ejt.1">
    <property type="organism name" value="mouse"/>
</dbReference>
<dbReference type="AGR" id="MGI:2681217"/>
<dbReference type="CTD" id="387345"/>
<dbReference type="MGI" id="MGI:2681217">
    <property type="gene designation" value="Tas2r113"/>
</dbReference>
<dbReference type="VEuPathDB" id="HostDB:ENSMUSG00000056926"/>
<dbReference type="eggNOG" id="ENOG502SKRK">
    <property type="taxonomic scope" value="Eukaryota"/>
</dbReference>
<dbReference type="GeneTree" id="ENSGT01100000263477"/>
<dbReference type="HOGENOM" id="CLU_072337_3_0_1"/>
<dbReference type="InParanoid" id="Q7M711"/>
<dbReference type="OMA" id="PERYLIF"/>
<dbReference type="OrthoDB" id="8876749at2759"/>
<dbReference type="PhylomeDB" id="Q7M711"/>
<dbReference type="TreeFam" id="TF335891"/>
<dbReference type="BioGRID-ORCS" id="387345">
    <property type="hits" value="4 hits in 78 CRISPR screens"/>
</dbReference>
<dbReference type="PRO" id="PR:Q7M711"/>
<dbReference type="Proteomes" id="UP000000589">
    <property type="component" value="Chromosome 6"/>
</dbReference>
<dbReference type="RNAct" id="Q7M711">
    <property type="molecule type" value="protein"/>
</dbReference>
<dbReference type="GO" id="GO:0016020">
    <property type="term" value="C:membrane"/>
    <property type="evidence" value="ECO:0007669"/>
    <property type="project" value="UniProtKB-SubCell"/>
</dbReference>
<dbReference type="GO" id="GO:0033038">
    <property type="term" value="F:bitter taste receptor activity"/>
    <property type="evidence" value="ECO:0007669"/>
    <property type="project" value="InterPro"/>
</dbReference>
<dbReference type="GO" id="GO:0004930">
    <property type="term" value="F:G protein-coupled receptor activity"/>
    <property type="evidence" value="ECO:0007669"/>
    <property type="project" value="UniProtKB-KW"/>
</dbReference>
<dbReference type="CDD" id="cd15019">
    <property type="entry name" value="7tm_TAS2R14-like"/>
    <property type="match status" value="1"/>
</dbReference>
<dbReference type="FunFam" id="1.20.1070.10:FF:000055">
    <property type="entry name" value="Taste receptor type 2"/>
    <property type="match status" value="1"/>
</dbReference>
<dbReference type="Gene3D" id="1.20.1070.10">
    <property type="entry name" value="Rhodopsin 7-helix transmembrane proteins"/>
    <property type="match status" value="1"/>
</dbReference>
<dbReference type="InterPro" id="IPR007960">
    <property type="entry name" value="TAS2R"/>
</dbReference>
<dbReference type="PANTHER" id="PTHR11394">
    <property type="entry name" value="TASTE RECEPTOR TYPE 2"/>
    <property type="match status" value="1"/>
</dbReference>
<dbReference type="PANTHER" id="PTHR11394:SF42">
    <property type="entry name" value="TASTE RECEPTOR TYPE 2 MEMBER 113"/>
    <property type="match status" value="1"/>
</dbReference>
<dbReference type="Pfam" id="PF05296">
    <property type="entry name" value="TAS2R"/>
    <property type="match status" value="1"/>
</dbReference>
<dbReference type="SUPFAM" id="SSF81321">
    <property type="entry name" value="Family A G protein-coupled receptor-like"/>
    <property type="match status" value="1"/>
</dbReference>
<accession>Q7M711</accession>
<name>TR113_MOUSE</name>
<organism>
    <name type="scientific">Mus musculus</name>
    <name type="common">Mouse</name>
    <dbReference type="NCBI Taxonomy" id="10090"/>
    <lineage>
        <taxon>Eukaryota</taxon>
        <taxon>Metazoa</taxon>
        <taxon>Chordata</taxon>
        <taxon>Craniata</taxon>
        <taxon>Vertebrata</taxon>
        <taxon>Euteleostomi</taxon>
        <taxon>Mammalia</taxon>
        <taxon>Eutheria</taxon>
        <taxon>Euarchontoglires</taxon>
        <taxon>Glires</taxon>
        <taxon>Rodentia</taxon>
        <taxon>Myomorpha</taxon>
        <taxon>Muroidea</taxon>
        <taxon>Muridae</taxon>
        <taxon>Murinae</taxon>
        <taxon>Mus</taxon>
        <taxon>Mus</taxon>
    </lineage>
</organism>